<sequence>MGLFGKTQERPPKDLVNEWSLKIRKEMRVIDRQIRDIQREQEKVKRSIKESAKKGNREACVILAKEVVHSKKAVNKLYASKAHMNSVLMSMKNQLAVLRVSGSLQKSTEVMKAMQNLVKIPEIQATMRDLSKEMMKAGIIEEMLEDTFEGMEDQDEMEEQAEMEIDRILFEITAGALGKAPSKVTDALPEPEITGAMAASDEEEEEDLEAMQSRLAALRS</sequence>
<reference key="1">
    <citation type="submission" date="2006-10" db="EMBL/GenBank/DDBJ databases">
        <authorList>
            <consortium name="Sanger Xenopus tropicalis EST/cDNA project"/>
        </authorList>
    </citation>
    <scope>NUCLEOTIDE SEQUENCE [LARGE SCALE MRNA]</scope>
    <source>
        <tissue>Egg</tissue>
    </source>
</reference>
<reference key="2">
    <citation type="journal article" date="2010" name="Science">
        <title>The genome of the Western clawed frog Xenopus tropicalis.</title>
        <authorList>
            <person name="Hellsten U."/>
            <person name="Harland R.M."/>
            <person name="Gilchrist M.J."/>
            <person name="Hendrix D."/>
            <person name="Jurka J."/>
            <person name="Kapitonov V."/>
            <person name="Ovcharenko I."/>
            <person name="Putnam N.H."/>
            <person name="Shu S."/>
            <person name="Taher L."/>
            <person name="Blitz I.L."/>
            <person name="Blumberg B."/>
            <person name="Dichmann D.S."/>
            <person name="Dubchak I."/>
            <person name="Amaya E."/>
            <person name="Detter J.C."/>
            <person name="Fletcher R."/>
            <person name="Gerhard D.S."/>
            <person name="Goodstein D."/>
            <person name="Graves T."/>
            <person name="Grigoriev I.V."/>
            <person name="Grimwood J."/>
            <person name="Kawashima T."/>
            <person name="Lindquist E."/>
            <person name="Lucas S.M."/>
            <person name="Mead P.E."/>
            <person name="Mitros T."/>
            <person name="Ogino H."/>
            <person name="Ohta Y."/>
            <person name="Poliakov A.V."/>
            <person name="Pollet N."/>
            <person name="Robert J."/>
            <person name="Salamov A."/>
            <person name="Sater A.K."/>
            <person name="Schmutz J."/>
            <person name="Terry A."/>
            <person name="Vize P.D."/>
            <person name="Warren W.C."/>
            <person name="Wells D."/>
            <person name="Wills A."/>
            <person name="Wilson R.K."/>
            <person name="Zimmerman L.B."/>
            <person name="Zorn A.M."/>
            <person name="Grainger R."/>
            <person name="Grammer T."/>
            <person name="Khokha M.K."/>
            <person name="Richardson P.M."/>
            <person name="Rokhsar D.S."/>
        </authorList>
    </citation>
    <scope>NUCLEOTIDE SEQUENCE [LARGE SCALE GENOMIC DNA]</scope>
</reference>
<reference key="3">
    <citation type="submission" date="2005-03" db="EMBL/GenBank/DDBJ databases">
        <authorList>
            <consortium name="NIH - Xenopus Gene Collection (XGC) project"/>
        </authorList>
    </citation>
    <scope>NUCLEOTIDE SEQUENCE [LARGE SCALE MRNA]</scope>
</reference>
<dbReference type="EMBL" id="CR926287">
    <property type="protein sequence ID" value="CAJ81451.1"/>
    <property type="molecule type" value="mRNA"/>
</dbReference>
<dbReference type="EMBL" id="AAMC01068556">
    <property type="status" value="NOT_ANNOTATED_CDS"/>
    <property type="molecule type" value="Genomic_DNA"/>
</dbReference>
<dbReference type="EMBL" id="BC091022">
    <property type="protein sequence ID" value="AAH91022.1"/>
    <property type="molecule type" value="mRNA"/>
</dbReference>
<dbReference type="RefSeq" id="NP_001016229.2">
    <property type="nucleotide sequence ID" value="NM_001016229.2"/>
</dbReference>
<dbReference type="SMR" id="Q5BKM3"/>
<dbReference type="FunCoup" id="Q5BKM3">
    <property type="interactions" value="2269"/>
</dbReference>
<dbReference type="STRING" id="8364.ENSXETP00000016999"/>
<dbReference type="PaxDb" id="8364-ENSXETP00000038990"/>
<dbReference type="GeneID" id="548983"/>
<dbReference type="KEGG" id="xtr:548983"/>
<dbReference type="CTD" id="51652"/>
<dbReference type="eggNOG" id="KOG3229">
    <property type="taxonomic scope" value="Eukaryota"/>
</dbReference>
<dbReference type="HOGENOM" id="CLU_069208_0_1_1"/>
<dbReference type="InParanoid" id="Q5BKM3"/>
<dbReference type="OrthoDB" id="8062037at2759"/>
<dbReference type="TreeFam" id="TF105848"/>
<dbReference type="Reactome" id="R-XTR-1632852">
    <property type="pathway name" value="Macroautophagy"/>
</dbReference>
<dbReference type="Reactome" id="R-XTR-917729">
    <property type="pathway name" value="Endosomal Sorting Complex Required For Transport (ESCRT)"/>
</dbReference>
<dbReference type="Reactome" id="R-XTR-9668328">
    <property type="pathway name" value="Sealing of the nuclear envelope (NE) by ESCRT-III"/>
</dbReference>
<dbReference type="Proteomes" id="UP000008143">
    <property type="component" value="Chromosome 1"/>
</dbReference>
<dbReference type="Bgee" id="ENSXETG00000017980">
    <property type="expression patterns" value="Expressed in testis and 13 other cell types or tissues"/>
</dbReference>
<dbReference type="GO" id="GO:0005829">
    <property type="term" value="C:cytosol"/>
    <property type="evidence" value="ECO:0007669"/>
    <property type="project" value="UniProtKB-SubCell"/>
</dbReference>
<dbReference type="GO" id="GO:0031902">
    <property type="term" value="C:late endosome membrane"/>
    <property type="evidence" value="ECO:0007669"/>
    <property type="project" value="UniProtKB-SubCell"/>
</dbReference>
<dbReference type="GO" id="GO:0015031">
    <property type="term" value="P:protein transport"/>
    <property type="evidence" value="ECO:0007669"/>
    <property type="project" value="UniProtKB-KW"/>
</dbReference>
<dbReference type="GO" id="GO:0007034">
    <property type="term" value="P:vacuolar transport"/>
    <property type="evidence" value="ECO:0007669"/>
    <property type="project" value="InterPro"/>
</dbReference>
<dbReference type="Gene3D" id="6.10.140.1230">
    <property type="match status" value="1"/>
</dbReference>
<dbReference type="InterPro" id="IPR005024">
    <property type="entry name" value="Snf7_fam"/>
</dbReference>
<dbReference type="PANTHER" id="PTHR10476">
    <property type="entry name" value="CHARGED MULTIVESICULAR BODY PROTEIN"/>
    <property type="match status" value="1"/>
</dbReference>
<dbReference type="Pfam" id="PF03357">
    <property type="entry name" value="Snf7"/>
    <property type="match status" value="1"/>
</dbReference>
<name>CHMP3_XENTR</name>
<protein>
    <recommendedName>
        <fullName>Charged multivesicular body protein 3</fullName>
    </recommendedName>
    <alternativeName>
        <fullName>Chromatin-modifying protein 3</fullName>
    </alternativeName>
    <alternativeName>
        <fullName>Vacuolar protein-sorting-associated protein 24</fullName>
    </alternativeName>
</protein>
<keyword id="KW-0175">Coiled coil</keyword>
<keyword id="KW-0963">Cytoplasm</keyword>
<keyword id="KW-0967">Endosome</keyword>
<keyword id="KW-0449">Lipoprotein</keyword>
<keyword id="KW-0472">Membrane</keyword>
<keyword id="KW-0519">Myristate</keyword>
<keyword id="KW-0653">Protein transport</keyword>
<keyword id="KW-1185">Reference proteome</keyword>
<keyword id="KW-0813">Transport</keyword>
<evidence type="ECO:0000250" key="1"/>
<evidence type="ECO:0000255" key="2"/>
<evidence type="ECO:0000256" key="3">
    <source>
        <dbReference type="SAM" id="MobiDB-lite"/>
    </source>
</evidence>
<evidence type="ECO:0000305" key="4"/>
<comment type="function">
    <text evidence="1">Probable core component of the endosomal sorting required for transport complex III (ESCRT-III) which is involved in multivesicular bodies (MVBs) formation and sorting of endosomal cargo proteins into MVBs. MVBs contain intraluminal vesicles (ILVs) that are generated by invagination and scission from the limiting membrane of the endosome and mostly are delivered to lysosomes enabling degradation of membrane proteins, such as stimulated growth factor receptors, lysosomal enzymes and lipids. Involved in late stages of cytokinesis. Plays a role in endosomal sorting/trafficking of EGF receptor (By similarity).</text>
</comment>
<comment type="subunit">
    <text evidence="1">Probable core component of the endosomal sorting required for transport complex III (ESCRT-III). ESCRT-III components are thought to multimerize to form a flat lattice on the perimeter membrane of the endosome. Several assembly forms of ESCRT-III may exist that interact and act sequentially (By similarity).</text>
</comment>
<comment type="subcellular location">
    <subcellularLocation>
        <location evidence="1">Cytoplasm</location>
        <location evidence="1">Cytosol</location>
    </subcellularLocation>
    <subcellularLocation>
        <location evidence="1">Membrane</location>
        <topology evidence="1">Lipid-anchor</topology>
    </subcellularLocation>
    <subcellularLocation>
        <location evidence="1">Endosome</location>
    </subcellularLocation>
    <subcellularLocation>
        <location evidence="1">Late endosome membrane</location>
    </subcellularLocation>
</comment>
<comment type="similarity">
    <text evidence="4">Belongs to the SNF7 family.</text>
</comment>
<feature type="initiator methionine" description="Removed" evidence="2">
    <location>
        <position position="1"/>
    </location>
</feature>
<feature type="chain" id="PRO_0000211486" description="Charged multivesicular body protein 3">
    <location>
        <begin position="2"/>
        <end position="220"/>
    </location>
</feature>
<feature type="region of interest" description="Important for autoinhibitory function" evidence="1">
    <location>
        <begin position="168"/>
        <end position="169"/>
    </location>
</feature>
<feature type="region of interest" description="Disordered" evidence="3">
    <location>
        <begin position="196"/>
        <end position="220"/>
    </location>
</feature>
<feature type="region of interest" description="Interaction with STAMBP" evidence="1">
    <location>
        <begin position="203"/>
        <end position="207"/>
    </location>
</feature>
<feature type="region of interest" description="Interaction with STAMBP" evidence="1">
    <location>
        <begin position="219"/>
        <end position="220"/>
    </location>
</feature>
<feature type="coiled-coil region" evidence="2">
    <location>
        <begin position="22"/>
        <end position="54"/>
    </location>
</feature>
<feature type="coiled-coil region" evidence="2">
    <location>
        <begin position="197"/>
        <end position="220"/>
    </location>
</feature>
<feature type="short sequence motif" description="MIT-interacting motif">
    <location>
        <begin position="201"/>
        <end position="209"/>
    </location>
</feature>
<feature type="compositionally biased region" description="Acidic residues" evidence="3">
    <location>
        <begin position="200"/>
        <end position="209"/>
    </location>
</feature>
<feature type="site" description="Interaction with STAMBP" evidence="1">
    <location>
        <position position="214"/>
    </location>
</feature>
<feature type="lipid moiety-binding region" description="N-myristoyl glycine" evidence="2">
    <location>
        <position position="2"/>
    </location>
</feature>
<feature type="sequence conflict" description="In Ref. 3; AAH91022." evidence="4" ref="3">
    <original>V</original>
    <variation>L</variation>
    <location>
        <position position="29"/>
    </location>
</feature>
<proteinExistence type="evidence at transcript level"/>
<gene>
    <name type="primary">chmp3</name>
    <name type="synonym">vps24</name>
    <name type="ORF">TEgg091h16.1</name>
</gene>
<accession>Q5BKM3</accession>
<accession>Q28CN4</accession>
<organism>
    <name type="scientific">Xenopus tropicalis</name>
    <name type="common">Western clawed frog</name>
    <name type="synonym">Silurana tropicalis</name>
    <dbReference type="NCBI Taxonomy" id="8364"/>
    <lineage>
        <taxon>Eukaryota</taxon>
        <taxon>Metazoa</taxon>
        <taxon>Chordata</taxon>
        <taxon>Craniata</taxon>
        <taxon>Vertebrata</taxon>
        <taxon>Euteleostomi</taxon>
        <taxon>Amphibia</taxon>
        <taxon>Batrachia</taxon>
        <taxon>Anura</taxon>
        <taxon>Pipoidea</taxon>
        <taxon>Pipidae</taxon>
        <taxon>Xenopodinae</taxon>
        <taxon>Xenopus</taxon>
        <taxon>Silurana</taxon>
    </lineage>
</organism>